<dbReference type="EMBL" id="CP002685">
    <property type="protein sequence ID" value="AEC06695.1"/>
    <property type="molecule type" value="Genomic_DNA"/>
</dbReference>
<dbReference type="RefSeq" id="NP_565426.2">
    <property type="nucleotide sequence ID" value="NM_127339.3"/>
</dbReference>
<dbReference type="SMR" id="F4IPI4"/>
<dbReference type="FunCoup" id="F4IPI4">
    <property type="interactions" value="196"/>
</dbReference>
<dbReference type="STRING" id="3702.F4IPI4"/>
<dbReference type="iPTMnet" id="F4IPI4"/>
<dbReference type="MetOSite" id="F4IPI4"/>
<dbReference type="PaxDb" id="3702-AT2G17850.1"/>
<dbReference type="EnsemblPlants" id="AT2G17850.1">
    <property type="protein sequence ID" value="AT2G17850.1"/>
    <property type="gene ID" value="AT2G17850"/>
</dbReference>
<dbReference type="GeneID" id="816295"/>
<dbReference type="Gramene" id="AT2G17850.1">
    <property type="protein sequence ID" value="AT2G17850.1"/>
    <property type="gene ID" value="AT2G17850"/>
</dbReference>
<dbReference type="KEGG" id="ath:AT2G17850"/>
<dbReference type="Araport" id="AT2G17850"/>
<dbReference type="TAIR" id="AT2G17850"/>
<dbReference type="eggNOG" id="KOG1530">
    <property type="taxonomic scope" value="Eukaryota"/>
</dbReference>
<dbReference type="HOGENOM" id="CLU_089574_1_0_1"/>
<dbReference type="InParanoid" id="F4IPI4"/>
<dbReference type="OMA" id="MEGGYMA"/>
<dbReference type="PRO" id="PR:F4IPI4"/>
<dbReference type="Proteomes" id="UP000006548">
    <property type="component" value="Chromosome 2"/>
</dbReference>
<dbReference type="ExpressionAtlas" id="F4IPI4">
    <property type="expression patterns" value="baseline and differential"/>
</dbReference>
<dbReference type="GO" id="GO:0003824">
    <property type="term" value="F:catalytic activity"/>
    <property type="evidence" value="ECO:0007669"/>
    <property type="project" value="InterPro"/>
</dbReference>
<dbReference type="CDD" id="cd00158">
    <property type="entry name" value="RHOD"/>
    <property type="match status" value="1"/>
</dbReference>
<dbReference type="Gene3D" id="3.40.250.10">
    <property type="entry name" value="Rhodanese-like domain"/>
    <property type="match status" value="1"/>
</dbReference>
<dbReference type="InterPro" id="IPR001763">
    <property type="entry name" value="Rhodanese-like_dom"/>
</dbReference>
<dbReference type="InterPro" id="IPR036873">
    <property type="entry name" value="Rhodanese-like_dom_sf"/>
</dbReference>
<dbReference type="InterPro" id="IPR044684">
    <property type="entry name" value="STR17/STR18/HARC1-like"/>
</dbReference>
<dbReference type="PANTHER" id="PTHR44542:SF23">
    <property type="entry name" value="RHODANESE-LIKE DOMAIN-CONTAINING PROTEIN 17"/>
    <property type="match status" value="1"/>
</dbReference>
<dbReference type="PANTHER" id="PTHR44542">
    <property type="entry name" value="THIOSULFATE SULFURTRANSFERASE 18"/>
    <property type="match status" value="1"/>
</dbReference>
<dbReference type="Pfam" id="PF00581">
    <property type="entry name" value="Rhodanese"/>
    <property type="match status" value="1"/>
</dbReference>
<dbReference type="SMART" id="SM00450">
    <property type="entry name" value="RHOD"/>
    <property type="match status" value="1"/>
</dbReference>
<dbReference type="SUPFAM" id="SSF52821">
    <property type="entry name" value="Rhodanese/Cell cycle control phosphatase"/>
    <property type="match status" value="1"/>
</dbReference>
<dbReference type="PROSITE" id="PS50206">
    <property type="entry name" value="RHODANESE_3"/>
    <property type="match status" value="1"/>
</dbReference>
<gene>
    <name type="primary">STR17</name>
    <name type="ordered locus">At2g17850</name>
    <name type="ORF">T13L16.13</name>
</gene>
<reference key="1">
    <citation type="journal article" date="1999" name="Nature">
        <title>Sequence and analysis of chromosome 2 of the plant Arabidopsis thaliana.</title>
        <authorList>
            <person name="Lin X."/>
            <person name="Kaul S."/>
            <person name="Rounsley S.D."/>
            <person name="Shea T.P."/>
            <person name="Benito M.-I."/>
            <person name="Town C.D."/>
            <person name="Fujii C.Y."/>
            <person name="Mason T.M."/>
            <person name="Bowman C.L."/>
            <person name="Barnstead M.E."/>
            <person name="Feldblyum T.V."/>
            <person name="Buell C.R."/>
            <person name="Ketchum K.A."/>
            <person name="Lee J.J."/>
            <person name="Ronning C.M."/>
            <person name="Koo H.L."/>
            <person name="Moffat K.S."/>
            <person name="Cronin L.A."/>
            <person name="Shen M."/>
            <person name="Pai G."/>
            <person name="Van Aken S."/>
            <person name="Umayam L."/>
            <person name="Tallon L.J."/>
            <person name="Gill J.E."/>
            <person name="Adams M.D."/>
            <person name="Carrera A.J."/>
            <person name="Creasy T.H."/>
            <person name="Goodman H.M."/>
            <person name="Somerville C.R."/>
            <person name="Copenhaver G.P."/>
            <person name="Preuss D."/>
            <person name="Nierman W.C."/>
            <person name="White O."/>
            <person name="Eisen J.A."/>
            <person name="Salzberg S.L."/>
            <person name="Fraser C.M."/>
            <person name="Venter J.C."/>
        </authorList>
    </citation>
    <scope>NUCLEOTIDE SEQUENCE [LARGE SCALE GENOMIC DNA]</scope>
    <source>
        <strain>cv. Columbia</strain>
    </source>
</reference>
<reference key="2">
    <citation type="journal article" date="2017" name="Plant J.">
        <title>Araport11: a complete reannotation of the Arabidopsis thaliana reference genome.</title>
        <authorList>
            <person name="Cheng C.Y."/>
            <person name="Krishnakumar V."/>
            <person name="Chan A.P."/>
            <person name="Thibaud-Nissen F."/>
            <person name="Schobel S."/>
            <person name="Town C.D."/>
        </authorList>
    </citation>
    <scope>GENOME REANNOTATION</scope>
    <source>
        <strain>cv. Columbia</strain>
    </source>
</reference>
<reference key="3">
    <citation type="journal article" date="2007" name="Plant Physiol. Biochem.">
        <title>Differential expression of Arabidopsis sulfurtransferases under various growth conditions.</title>
        <authorList>
            <person name="Bartels A."/>
            <person name="Mock H.P."/>
            <person name="Papenbrock J."/>
        </authorList>
    </citation>
    <scope>GENE FAMILY</scope>
    <scope>NOMENCLATURE</scope>
</reference>
<feature type="chain" id="PRO_0000416537" description="Rhodanese-like domain-containing protein 17">
    <location>
        <begin position="1"/>
        <end position="156"/>
    </location>
</feature>
<feature type="domain" description="Rhodanese" evidence="1">
    <location>
        <begin position="44"/>
        <end position="146"/>
    </location>
</feature>
<feature type="active site" description="Cysteine persulfide intermediate" evidence="1">
    <location>
        <position position="106"/>
    </location>
</feature>
<organism>
    <name type="scientific">Arabidopsis thaliana</name>
    <name type="common">Mouse-ear cress</name>
    <dbReference type="NCBI Taxonomy" id="3702"/>
    <lineage>
        <taxon>Eukaryota</taxon>
        <taxon>Viridiplantae</taxon>
        <taxon>Streptophyta</taxon>
        <taxon>Embryophyta</taxon>
        <taxon>Tracheophyta</taxon>
        <taxon>Spermatophyta</taxon>
        <taxon>Magnoliopsida</taxon>
        <taxon>eudicotyledons</taxon>
        <taxon>Gunneridae</taxon>
        <taxon>Pentapetalae</taxon>
        <taxon>rosids</taxon>
        <taxon>malvids</taxon>
        <taxon>Brassicales</taxon>
        <taxon>Brassicaceae</taxon>
        <taxon>Camelineae</taxon>
        <taxon>Arabidopsis</taxon>
    </lineage>
</organism>
<accession>F4IPI4</accession>
<protein>
    <recommendedName>
        <fullName>Rhodanese-like domain-containing protein 17</fullName>
    </recommendedName>
    <alternativeName>
        <fullName>Sulfurtransferase 17</fullName>
        <shortName>AtStr17</shortName>
    </alternativeName>
</protein>
<sequence>MDSLHVLRSFLLLFIVFNHLPRTTTSMSEPKVITIDVNQAQKLLDSGYTFLDVRTVEEFKKGHVDSENVFNVPYWLYTPQGQEINPNFLKHVSSLCNQTDHLILGCKSGVRSLHATKFLVSSGFKTVRNMDGGYIAWVNKRFPVKVEHKELKYDEL</sequence>
<evidence type="ECO:0000255" key="1">
    <source>
        <dbReference type="PROSITE-ProRule" id="PRU00173"/>
    </source>
</evidence>
<keyword id="KW-1185">Reference proteome</keyword>
<proteinExistence type="evidence at transcript level"/>
<name>STR17_ARATH</name>